<dbReference type="EC" id="2.3.1.234" evidence="1"/>
<dbReference type="EMBL" id="AE009951">
    <property type="protein sequence ID" value="AAL94745.1"/>
    <property type="molecule type" value="Genomic_DNA"/>
</dbReference>
<dbReference type="RefSeq" id="NP_603446.1">
    <property type="nucleotide sequence ID" value="NC_003454.1"/>
</dbReference>
<dbReference type="RefSeq" id="WP_011016472.1">
    <property type="nucleotide sequence ID" value="NZ_OZ209243.1"/>
</dbReference>
<dbReference type="SMR" id="Q8RFX8"/>
<dbReference type="FunCoup" id="Q8RFX8">
    <property type="interactions" value="430"/>
</dbReference>
<dbReference type="STRING" id="190304.FN0549"/>
<dbReference type="PaxDb" id="190304-FN0549"/>
<dbReference type="EnsemblBacteria" id="AAL94745">
    <property type="protein sequence ID" value="AAL94745"/>
    <property type="gene ID" value="FN0549"/>
</dbReference>
<dbReference type="GeneID" id="79783551"/>
<dbReference type="KEGG" id="fnu:FN0549"/>
<dbReference type="PATRIC" id="fig|190304.8.peg.1116"/>
<dbReference type="eggNOG" id="COG0533">
    <property type="taxonomic scope" value="Bacteria"/>
</dbReference>
<dbReference type="HOGENOM" id="CLU_023208_0_2_0"/>
<dbReference type="InParanoid" id="Q8RFX8"/>
<dbReference type="BioCyc" id="FNUC190304:G1FZS-1138-MONOMER"/>
<dbReference type="Proteomes" id="UP000002521">
    <property type="component" value="Chromosome"/>
</dbReference>
<dbReference type="GO" id="GO:0005737">
    <property type="term" value="C:cytoplasm"/>
    <property type="evidence" value="ECO:0007669"/>
    <property type="project" value="UniProtKB-SubCell"/>
</dbReference>
<dbReference type="GO" id="GO:0005506">
    <property type="term" value="F:iron ion binding"/>
    <property type="evidence" value="ECO:0007669"/>
    <property type="project" value="UniProtKB-UniRule"/>
</dbReference>
<dbReference type="GO" id="GO:0061711">
    <property type="term" value="F:N(6)-L-threonylcarbamoyladenine synthase activity"/>
    <property type="evidence" value="ECO:0007669"/>
    <property type="project" value="UniProtKB-EC"/>
</dbReference>
<dbReference type="GO" id="GO:0002949">
    <property type="term" value="P:tRNA threonylcarbamoyladenosine modification"/>
    <property type="evidence" value="ECO:0007669"/>
    <property type="project" value="UniProtKB-UniRule"/>
</dbReference>
<dbReference type="CDD" id="cd24133">
    <property type="entry name" value="ASKHA_NBD_TsaD_bac"/>
    <property type="match status" value="1"/>
</dbReference>
<dbReference type="FunFam" id="3.30.420.40:FF:000012">
    <property type="entry name" value="tRNA N6-adenosine threonylcarbamoyltransferase"/>
    <property type="match status" value="1"/>
</dbReference>
<dbReference type="FunFam" id="3.30.420.40:FF:000040">
    <property type="entry name" value="tRNA N6-adenosine threonylcarbamoyltransferase"/>
    <property type="match status" value="1"/>
</dbReference>
<dbReference type="Gene3D" id="3.30.420.40">
    <property type="match status" value="2"/>
</dbReference>
<dbReference type="HAMAP" id="MF_01445">
    <property type="entry name" value="TsaD"/>
    <property type="match status" value="1"/>
</dbReference>
<dbReference type="InterPro" id="IPR043129">
    <property type="entry name" value="ATPase_NBD"/>
</dbReference>
<dbReference type="InterPro" id="IPR000905">
    <property type="entry name" value="Gcp-like_dom"/>
</dbReference>
<dbReference type="InterPro" id="IPR017861">
    <property type="entry name" value="KAE1/TsaD"/>
</dbReference>
<dbReference type="InterPro" id="IPR022450">
    <property type="entry name" value="TsaD"/>
</dbReference>
<dbReference type="NCBIfam" id="TIGR00329">
    <property type="entry name" value="gcp_kae1"/>
    <property type="match status" value="1"/>
</dbReference>
<dbReference type="NCBIfam" id="TIGR03723">
    <property type="entry name" value="T6A_TsaD_YgjD"/>
    <property type="match status" value="1"/>
</dbReference>
<dbReference type="PANTHER" id="PTHR11735">
    <property type="entry name" value="TRNA N6-ADENOSINE THREONYLCARBAMOYLTRANSFERASE"/>
    <property type="match status" value="1"/>
</dbReference>
<dbReference type="PANTHER" id="PTHR11735:SF6">
    <property type="entry name" value="TRNA N6-ADENOSINE THREONYLCARBAMOYLTRANSFERASE, MITOCHONDRIAL"/>
    <property type="match status" value="1"/>
</dbReference>
<dbReference type="Pfam" id="PF00814">
    <property type="entry name" value="TsaD"/>
    <property type="match status" value="1"/>
</dbReference>
<dbReference type="PRINTS" id="PR00789">
    <property type="entry name" value="OSIALOPTASE"/>
</dbReference>
<dbReference type="SUPFAM" id="SSF53067">
    <property type="entry name" value="Actin-like ATPase domain"/>
    <property type="match status" value="2"/>
</dbReference>
<sequence length="341" mass="37112">MIILGIESSCDETSIAVVKDGKEILSNNISSQIEIHKEYGGVVPEIASRQHIKNIATVLEESLEEAKITLDDVDYIAVTYAPGLIGALLVGVSFAKGLSYAKNIPIIPVHHIKGHMYANFLEHDVELPCISLVVSGGHTNIIYIDENHNFINIGETLDDAVGESCDKVARVLGLGYPGGPVIDKMYYKGDRDFLKITKPKVSRFDFSFSGIKTAIINFDNNMKMKNQEYKKEDLAASFLGTVVDILCDKTLNAAVEKNVKTIMLAGGVAANSLLRSQLTEKAAEKGIKVIYPSMKLCTDNAAMIAEAAYYKLKNAKNEKDCFAGLDLNGVASLMVSDEKAI</sequence>
<feature type="chain" id="PRO_0000303371" description="tRNA N6-adenosine threonylcarbamoyltransferase">
    <location>
        <begin position="1"/>
        <end position="341"/>
    </location>
</feature>
<feature type="binding site" evidence="1">
    <location>
        <position position="111"/>
    </location>
    <ligand>
        <name>Fe cation</name>
        <dbReference type="ChEBI" id="CHEBI:24875"/>
    </ligand>
</feature>
<feature type="binding site" evidence="1">
    <location>
        <position position="115"/>
    </location>
    <ligand>
        <name>Fe cation</name>
        <dbReference type="ChEBI" id="CHEBI:24875"/>
    </ligand>
</feature>
<feature type="binding site" evidence="1">
    <location>
        <begin position="133"/>
        <end position="137"/>
    </location>
    <ligand>
        <name>substrate</name>
    </ligand>
</feature>
<feature type="binding site" evidence="1">
    <location>
        <position position="166"/>
    </location>
    <ligand>
        <name>substrate</name>
    </ligand>
</feature>
<feature type="binding site" evidence="1">
    <location>
        <position position="179"/>
    </location>
    <ligand>
        <name>substrate</name>
    </ligand>
</feature>
<feature type="binding site" evidence="1">
    <location>
        <position position="183"/>
    </location>
    <ligand>
        <name>substrate</name>
    </ligand>
</feature>
<feature type="binding site" evidence="1">
    <location>
        <position position="271"/>
    </location>
    <ligand>
        <name>substrate</name>
    </ligand>
</feature>
<feature type="binding site" evidence="1">
    <location>
        <position position="299"/>
    </location>
    <ligand>
        <name>Fe cation</name>
        <dbReference type="ChEBI" id="CHEBI:24875"/>
    </ligand>
</feature>
<reference key="1">
    <citation type="journal article" date="2002" name="J. Bacteriol.">
        <title>Genome sequence and analysis of the oral bacterium Fusobacterium nucleatum strain ATCC 25586.</title>
        <authorList>
            <person name="Kapatral V."/>
            <person name="Anderson I."/>
            <person name="Ivanova N."/>
            <person name="Reznik G."/>
            <person name="Los T."/>
            <person name="Lykidis A."/>
            <person name="Bhattacharyya A."/>
            <person name="Bartman A."/>
            <person name="Gardner W."/>
            <person name="Grechkin G."/>
            <person name="Zhu L."/>
            <person name="Vasieva O."/>
            <person name="Chu L."/>
            <person name="Kogan Y."/>
            <person name="Chaga O."/>
            <person name="Goltsman E."/>
            <person name="Bernal A."/>
            <person name="Larsen N."/>
            <person name="D'Souza M."/>
            <person name="Walunas T."/>
            <person name="Pusch G."/>
            <person name="Haselkorn R."/>
            <person name="Fonstein M."/>
            <person name="Kyrpides N.C."/>
            <person name="Overbeek R."/>
        </authorList>
    </citation>
    <scope>NUCLEOTIDE SEQUENCE [LARGE SCALE GENOMIC DNA]</scope>
    <source>
        <strain>ATCC 25586 / DSM 15643 / BCRC 10681 / CIP 101130 / JCM 8532 / KCTC 2640 / LMG 13131 / VPI 4355</strain>
    </source>
</reference>
<name>TSAD_FUSNN</name>
<accession>Q8RFX8</accession>
<comment type="function">
    <text evidence="1">Required for the formation of a threonylcarbamoyl group on adenosine at position 37 (t(6)A37) in tRNAs that read codons beginning with adenine. Is involved in the transfer of the threonylcarbamoyl moiety of threonylcarbamoyl-AMP (TC-AMP) to the N6 group of A37, together with TsaE and TsaB. TsaD likely plays a direct catalytic role in this reaction.</text>
</comment>
<comment type="catalytic activity">
    <reaction evidence="1">
        <text>L-threonylcarbamoyladenylate + adenosine(37) in tRNA = N(6)-L-threonylcarbamoyladenosine(37) in tRNA + AMP + H(+)</text>
        <dbReference type="Rhea" id="RHEA:37059"/>
        <dbReference type="Rhea" id="RHEA-COMP:10162"/>
        <dbReference type="Rhea" id="RHEA-COMP:10163"/>
        <dbReference type="ChEBI" id="CHEBI:15378"/>
        <dbReference type="ChEBI" id="CHEBI:73682"/>
        <dbReference type="ChEBI" id="CHEBI:74411"/>
        <dbReference type="ChEBI" id="CHEBI:74418"/>
        <dbReference type="ChEBI" id="CHEBI:456215"/>
        <dbReference type="EC" id="2.3.1.234"/>
    </reaction>
</comment>
<comment type="cofactor">
    <cofactor evidence="1">
        <name>Fe(2+)</name>
        <dbReference type="ChEBI" id="CHEBI:29033"/>
    </cofactor>
    <text evidence="1">Binds 1 Fe(2+) ion per subunit.</text>
</comment>
<comment type="subcellular location">
    <subcellularLocation>
        <location evidence="1">Cytoplasm</location>
    </subcellularLocation>
</comment>
<comment type="similarity">
    <text evidence="1">Belongs to the KAE1 / TsaD family.</text>
</comment>
<proteinExistence type="inferred from homology"/>
<keyword id="KW-0012">Acyltransferase</keyword>
<keyword id="KW-0963">Cytoplasm</keyword>
<keyword id="KW-0408">Iron</keyword>
<keyword id="KW-0479">Metal-binding</keyword>
<keyword id="KW-1185">Reference proteome</keyword>
<keyword id="KW-0808">Transferase</keyword>
<keyword id="KW-0819">tRNA processing</keyword>
<gene>
    <name evidence="1" type="primary">tsaD</name>
    <name type="synonym">gcp</name>
    <name type="ordered locus">FN0549</name>
</gene>
<evidence type="ECO:0000255" key="1">
    <source>
        <dbReference type="HAMAP-Rule" id="MF_01445"/>
    </source>
</evidence>
<organism>
    <name type="scientific">Fusobacterium nucleatum subsp. nucleatum (strain ATCC 25586 / DSM 15643 / BCRC 10681 / CIP 101130 / JCM 8532 / KCTC 2640 / LMG 13131 / VPI 4355)</name>
    <dbReference type="NCBI Taxonomy" id="190304"/>
    <lineage>
        <taxon>Bacteria</taxon>
        <taxon>Fusobacteriati</taxon>
        <taxon>Fusobacteriota</taxon>
        <taxon>Fusobacteriia</taxon>
        <taxon>Fusobacteriales</taxon>
        <taxon>Fusobacteriaceae</taxon>
        <taxon>Fusobacterium</taxon>
    </lineage>
</organism>
<protein>
    <recommendedName>
        <fullName evidence="1">tRNA N6-adenosine threonylcarbamoyltransferase</fullName>
        <ecNumber evidence="1">2.3.1.234</ecNumber>
    </recommendedName>
    <alternativeName>
        <fullName evidence="1">N6-L-threonylcarbamoyladenine synthase</fullName>
        <shortName evidence="1">t(6)A synthase</shortName>
    </alternativeName>
    <alternativeName>
        <fullName evidence="1">t(6)A37 threonylcarbamoyladenosine biosynthesis protein TsaD</fullName>
    </alternativeName>
    <alternativeName>
        <fullName evidence="1">tRNA threonylcarbamoyladenosine biosynthesis protein TsaD</fullName>
    </alternativeName>
</protein>